<accession>A1RWC8</accession>
<proteinExistence type="inferred from homology"/>
<organism>
    <name type="scientific">Thermofilum pendens (strain DSM 2475 / Hrk 5)</name>
    <dbReference type="NCBI Taxonomy" id="368408"/>
    <lineage>
        <taxon>Archaea</taxon>
        <taxon>Thermoproteota</taxon>
        <taxon>Thermoprotei</taxon>
        <taxon>Thermofilales</taxon>
        <taxon>Thermofilaceae</taxon>
        <taxon>Thermofilum</taxon>
    </lineage>
</organism>
<keyword id="KW-0285">Flavoprotein</keyword>
<keyword id="KW-0288">FMN</keyword>
<keyword id="KW-0418">Kinase</keyword>
<keyword id="KW-0460">Magnesium</keyword>
<keyword id="KW-0479">Metal-binding</keyword>
<keyword id="KW-0547">Nucleotide-binding</keyword>
<keyword id="KW-1185">Reference proteome</keyword>
<keyword id="KW-0808">Transferase</keyword>
<feature type="chain" id="PRO_0000322107" description="Riboflavin kinase">
    <location>
        <begin position="1"/>
        <end position="227"/>
    </location>
</feature>
<feature type="region of interest" description="H-T-H motif-like">
    <location>
        <begin position="1"/>
        <end position="92"/>
    </location>
</feature>
<feature type="region of interest" description="Riboflavin kinase">
    <location>
        <begin position="93"/>
        <end position="227"/>
    </location>
</feature>
<feature type="binding site" evidence="1">
    <location>
        <begin position="102"/>
        <end position="107"/>
    </location>
    <ligand>
        <name>CDP</name>
        <dbReference type="ChEBI" id="CHEBI:58069"/>
    </ligand>
</feature>
<feature type="binding site" evidence="1">
    <location>
        <position position="131"/>
    </location>
    <ligand>
        <name>Mg(2+)</name>
        <dbReference type="ChEBI" id="CHEBI:18420"/>
    </ligand>
</feature>
<feature type="binding site" evidence="1">
    <location>
        <position position="133"/>
    </location>
    <ligand>
        <name>Mg(2+)</name>
        <dbReference type="ChEBI" id="CHEBI:18420"/>
    </ligand>
</feature>
<feature type="binding site" evidence="1">
    <location>
        <position position="194"/>
    </location>
    <ligand>
        <name>FMN</name>
        <dbReference type="ChEBI" id="CHEBI:58210"/>
    </ligand>
</feature>
<feature type="binding site" evidence="1">
    <location>
        <position position="202"/>
    </location>
    <ligand>
        <name>FMN</name>
        <dbReference type="ChEBI" id="CHEBI:58210"/>
    </ligand>
</feature>
<feature type="binding site" evidence="1">
    <location>
        <begin position="207"/>
        <end position="210"/>
    </location>
    <ligand>
        <name>CDP</name>
        <dbReference type="ChEBI" id="CHEBI:58069"/>
    </ligand>
</feature>
<dbReference type="EC" id="2.7.1.161"/>
<dbReference type="EMBL" id="CP000505">
    <property type="protein sequence ID" value="ABL77508.1"/>
    <property type="molecule type" value="Genomic_DNA"/>
</dbReference>
<dbReference type="RefSeq" id="WP_011751773.1">
    <property type="nucleotide sequence ID" value="NC_008698.1"/>
</dbReference>
<dbReference type="SMR" id="A1RWC8"/>
<dbReference type="STRING" id="368408.Tpen_0098"/>
<dbReference type="EnsemblBacteria" id="ABL77508">
    <property type="protein sequence ID" value="ABL77508"/>
    <property type="gene ID" value="Tpen_0098"/>
</dbReference>
<dbReference type="GeneID" id="4602014"/>
<dbReference type="KEGG" id="tpe:Tpen_0098"/>
<dbReference type="eggNOG" id="arCOG01904">
    <property type="taxonomic scope" value="Archaea"/>
</dbReference>
<dbReference type="HOGENOM" id="CLU_088476_0_0_2"/>
<dbReference type="OrthoDB" id="30955at2157"/>
<dbReference type="UniPathway" id="UPA00276">
    <property type="reaction ID" value="UER00929"/>
</dbReference>
<dbReference type="Proteomes" id="UP000000641">
    <property type="component" value="Chromosome"/>
</dbReference>
<dbReference type="GO" id="GO:0046872">
    <property type="term" value="F:metal ion binding"/>
    <property type="evidence" value="ECO:0007669"/>
    <property type="project" value="UniProtKB-KW"/>
</dbReference>
<dbReference type="GO" id="GO:0000166">
    <property type="term" value="F:nucleotide binding"/>
    <property type="evidence" value="ECO:0007669"/>
    <property type="project" value="UniProtKB-KW"/>
</dbReference>
<dbReference type="GO" id="GO:0008531">
    <property type="term" value="F:riboflavin kinase activity"/>
    <property type="evidence" value="ECO:0007669"/>
    <property type="project" value="InterPro"/>
</dbReference>
<dbReference type="GO" id="GO:0009398">
    <property type="term" value="P:FMN biosynthetic process"/>
    <property type="evidence" value="ECO:0007669"/>
    <property type="project" value="UniProtKB-UniPathway"/>
</dbReference>
<dbReference type="GO" id="GO:0009231">
    <property type="term" value="P:riboflavin biosynthetic process"/>
    <property type="evidence" value="ECO:0007669"/>
    <property type="project" value="InterPro"/>
</dbReference>
<dbReference type="Gene3D" id="2.40.30.30">
    <property type="entry name" value="Riboflavin kinase-like"/>
    <property type="match status" value="1"/>
</dbReference>
<dbReference type="Gene3D" id="1.10.10.10">
    <property type="entry name" value="Winged helix-like DNA-binding domain superfamily/Winged helix DNA-binding domain"/>
    <property type="match status" value="1"/>
</dbReference>
<dbReference type="InterPro" id="IPR039063">
    <property type="entry name" value="RibK_CTP-dep"/>
</dbReference>
<dbReference type="InterPro" id="IPR023602">
    <property type="entry name" value="Riboflavin_kinase_CTP-dep"/>
</dbReference>
<dbReference type="InterPro" id="IPR023465">
    <property type="entry name" value="Riboflavin_kinase_dom_sf"/>
</dbReference>
<dbReference type="InterPro" id="IPR036388">
    <property type="entry name" value="WH-like_DNA-bd_sf"/>
</dbReference>
<dbReference type="InterPro" id="IPR036390">
    <property type="entry name" value="WH_DNA-bd_sf"/>
</dbReference>
<dbReference type="PANTHER" id="PTHR40706">
    <property type="entry name" value="RIBOFLAVIN KINASE"/>
    <property type="match status" value="1"/>
</dbReference>
<dbReference type="PANTHER" id="PTHR40706:SF1">
    <property type="entry name" value="RIBOFLAVIN KINASE"/>
    <property type="match status" value="1"/>
</dbReference>
<dbReference type="Pfam" id="PF01982">
    <property type="entry name" value="CTP-dep_RFKase"/>
    <property type="match status" value="1"/>
</dbReference>
<dbReference type="SUPFAM" id="SSF82114">
    <property type="entry name" value="Riboflavin kinase-like"/>
    <property type="match status" value="1"/>
</dbReference>
<dbReference type="SUPFAM" id="SSF46785">
    <property type="entry name" value="Winged helix' DNA-binding domain"/>
    <property type="match status" value="1"/>
</dbReference>
<protein>
    <recommendedName>
        <fullName>Riboflavin kinase</fullName>
        <shortName>RFK</shortName>
        <ecNumber>2.7.1.161</ecNumber>
    </recommendedName>
    <alternativeName>
        <fullName>CTP-dependent riboflavin kinase</fullName>
    </alternativeName>
    <alternativeName>
        <fullName>CTP:riboflavin 5'-phosphotransferase</fullName>
    </alternativeName>
    <alternativeName>
        <fullName>Flavokinase</fullName>
    </alternativeName>
</protein>
<sequence>MSKDYEVFPLLLEMAKRGCLVAPRRLSRIEILKTLGLTPWRFKKLVEAAEEEGYIERRVHGRMVFYVVTERGRALLRRVYDDLKRTIDSSTFLTLRGYVVPGLGEGAIYMGIPRYVEAFKEVLGYEPYPGTLNIKLVDEDVYLRRALREKRVGFRIEGFRLDEGRESCGVTVYKAMIMANGVTVSGAALDIDKTKHGDEILELIAPVRLRDELRLKDGDKVEVVIPV</sequence>
<gene>
    <name type="primary">ribK</name>
    <name type="ordered locus">Tpen_0098</name>
</gene>
<comment type="function">
    <text evidence="1">Catalyzes the CTP-dependent phosphorylation of riboflavin (vitamin B2) to form flavin mononucleotide (FMN).</text>
</comment>
<comment type="catalytic activity">
    <reaction>
        <text>riboflavin + CTP = CDP + FMN + H(+)</text>
        <dbReference type="Rhea" id="RHEA:25021"/>
        <dbReference type="ChEBI" id="CHEBI:15378"/>
        <dbReference type="ChEBI" id="CHEBI:37563"/>
        <dbReference type="ChEBI" id="CHEBI:57986"/>
        <dbReference type="ChEBI" id="CHEBI:58069"/>
        <dbReference type="ChEBI" id="CHEBI:58210"/>
        <dbReference type="EC" id="2.7.1.161"/>
    </reaction>
</comment>
<comment type="cofactor">
    <cofactor evidence="1">
        <name>Mg(2+)</name>
        <dbReference type="ChEBI" id="CHEBI:18420"/>
    </cofactor>
    <text evidence="1">Binds 1 Mg(2+) ion per subunit.</text>
</comment>
<comment type="pathway">
    <text>Cofactor biosynthesis; FMN biosynthesis; FMN from riboflavin (CTP route): step 1/1.</text>
</comment>
<comment type="similarity">
    <text evidence="2">Belongs to the archaeal riboflavin kinase family.</text>
</comment>
<name>RIFK_THEPD</name>
<reference key="1">
    <citation type="journal article" date="2008" name="J. Bacteriol.">
        <title>Genome sequence of Thermofilum pendens reveals an exceptional loss of biosynthetic pathways without genome reduction.</title>
        <authorList>
            <person name="Anderson I."/>
            <person name="Rodriguez J."/>
            <person name="Susanti D."/>
            <person name="Porat I."/>
            <person name="Reich C."/>
            <person name="Ulrich L.E."/>
            <person name="Elkins J.G."/>
            <person name="Mavromatis K."/>
            <person name="Lykidis A."/>
            <person name="Kim E."/>
            <person name="Thompson L.S."/>
            <person name="Nolan M."/>
            <person name="Land M."/>
            <person name="Copeland A."/>
            <person name="Lapidus A."/>
            <person name="Lucas S."/>
            <person name="Detter C."/>
            <person name="Zhulin I.B."/>
            <person name="Olsen G.J."/>
            <person name="Whitman W."/>
            <person name="Mukhopadhyay B."/>
            <person name="Bristow J."/>
            <person name="Kyrpides N."/>
        </authorList>
    </citation>
    <scope>NUCLEOTIDE SEQUENCE [LARGE SCALE GENOMIC DNA]</scope>
    <source>
        <strain>DSM 2475 / Hrk 5</strain>
    </source>
</reference>
<evidence type="ECO:0000250" key="1"/>
<evidence type="ECO:0000305" key="2"/>